<keyword id="KW-1185">Reference proteome</keyword>
<keyword id="KW-0687">Ribonucleoprotein</keyword>
<keyword id="KW-0689">Ribosomal protein</keyword>
<keyword id="KW-0694">RNA-binding</keyword>
<keyword id="KW-0699">rRNA-binding</keyword>
<name>RL25_GEODF</name>
<evidence type="ECO:0000255" key="1">
    <source>
        <dbReference type="HAMAP-Rule" id="MF_01334"/>
    </source>
</evidence>
<evidence type="ECO:0000305" key="2"/>
<sequence length="196" mass="20773">MDQRILNVELRSKTGKGISRQLRRSESIPGVVYGKGIESVSVSLKTKELSNAIAGEGGRNHILTLKGGGSLDGQMVIVADLLQDSLKGLPLHVDLHKINLADKIKVKVKVNLVGTAAGVKEGGLLDFAMHEIEIECLPSHIPEHLDVDVTSLTLGHSIHIGDLKELPGIKVLGDPKASIISVLGRAKEEAAPVAEA</sequence>
<comment type="function">
    <text evidence="1">This is one of the proteins that binds to the 5S RNA in the ribosome where it forms part of the central protuberance.</text>
</comment>
<comment type="subunit">
    <text evidence="1">Part of the 50S ribosomal subunit; part of the 5S rRNA/L5/L18/L25 subcomplex. Contacts the 5S rRNA. Binds to the 5S rRNA independently of L5 and L18.</text>
</comment>
<comment type="similarity">
    <text evidence="1">Belongs to the bacterial ribosomal protein bL25 family. CTC subfamily.</text>
</comment>
<dbReference type="EMBL" id="CP001390">
    <property type="protein sequence ID" value="ACM19925.1"/>
    <property type="molecule type" value="Genomic_DNA"/>
</dbReference>
<dbReference type="RefSeq" id="WP_012646654.1">
    <property type="nucleotide sequence ID" value="NC_011979.1"/>
</dbReference>
<dbReference type="SMR" id="B9M5U4"/>
<dbReference type="STRING" id="316067.Geob_1567"/>
<dbReference type="KEGG" id="geo:Geob_1567"/>
<dbReference type="eggNOG" id="COG1825">
    <property type="taxonomic scope" value="Bacteria"/>
</dbReference>
<dbReference type="HOGENOM" id="CLU_075939_2_1_7"/>
<dbReference type="OrthoDB" id="9786489at2"/>
<dbReference type="Proteomes" id="UP000007721">
    <property type="component" value="Chromosome"/>
</dbReference>
<dbReference type="GO" id="GO:0022625">
    <property type="term" value="C:cytosolic large ribosomal subunit"/>
    <property type="evidence" value="ECO:0007669"/>
    <property type="project" value="TreeGrafter"/>
</dbReference>
<dbReference type="GO" id="GO:0008097">
    <property type="term" value="F:5S rRNA binding"/>
    <property type="evidence" value="ECO:0007669"/>
    <property type="project" value="InterPro"/>
</dbReference>
<dbReference type="GO" id="GO:0003735">
    <property type="term" value="F:structural constituent of ribosome"/>
    <property type="evidence" value="ECO:0007669"/>
    <property type="project" value="InterPro"/>
</dbReference>
<dbReference type="GO" id="GO:0006412">
    <property type="term" value="P:translation"/>
    <property type="evidence" value="ECO:0007669"/>
    <property type="project" value="UniProtKB-UniRule"/>
</dbReference>
<dbReference type="CDD" id="cd00495">
    <property type="entry name" value="Ribosomal_L25_TL5_CTC"/>
    <property type="match status" value="1"/>
</dbReference>
<dbReference type="Gene3D" id="2.170.120.20">
    <property type="entry name" value="Ribosomal protein L25, beta domain"/>
    <property type="match status" value="1"/>
</dbReference>
<dbReference type="Gene3D" id="2.40.240.10">
    <property type="entry name" value="Ribosomal Protein L25, Chain P"/>
    <property type="match status" value="1"/>
</dbReference>
<dbReference type="HAMAP" id="MF_01334">
    <property type="entry name" value="Ribosomal_bL25_CTC"/>
    <property type="match status" value="1"/>
</dbReference>
<dbReference type="InterPro" id="IPR020056">
    <property type="entry name" value="Rbsml_bL25/Gln-tRNA_synth_N"/>
</dbReference>
<dbReference type="InterPro" id="IPR011035">
    <property type="entry name" value="Ribosomal_bL25/Gln-tRNA_synth"/>
</dbReference>
<dbReference type="InterPro" id="IPR020057">
    <property type="entry name" value="Ribosomal_bL25_b-dom"/>
</dbReference>
<dbReference type="InterPro" id="IPR037121">
    <property type="entry name" value="Ribosomal_bL25_C"/>
</dbReference>
<dbReference type="InterPro" id="IPR001021">
    <property type="entry name" value="Ribosomal_bL25_long"/>
</dbReference>
<dbReference type="InterPro" id="IPR029751">
    <property type="entry name" value="Ribosomal_L25_dom"/>
</dbReference>
<dbReference type="InterPro" id="IPR020930">
    <property type="entry name" value="Ribosomal_uL5_bac-type"/>
</dbReference>
<dbReference type="NCBIfam" id="TIGR00731">
    <property type="entry name" value="bL25_bact_ctc"/>
    <property type="match status" value="1"/>
</dbReference>
<dbReference type="PANTHER" id="PTHR33284">
    <property type="entry name" value="RIBOSOMAL PROTEIN L25/GLN-TRNA SYNTHETASE, ANTI-CODON-BINDING DOMAIN-CONTAINING PROTEIN"/>
    <property type="match status" value="1"/>
</dbReference>
<dbReference type="PANTHER" id="PTHR33284:SF1">
    <property type="entry name" value="RIBOSOMAL PROTEIN L25_GLN-TRNA SYNTHETASE, ANTI-CODON-BINDING DOMAIN-CONTAINING PROTEIN"/>
    <property type="match status" value="1"/>
</dbReference>
<dbReference type="Pfam" id="PF01386">
    <property type="entry name" value="Ribosomal_L25p"/>
    <property type="match status" value="1"/>
</dbReference>
<dbReference type="Pfam" id="PF14693">
    <property type="entry name" value="Ribosomal_TL5_C"/>
    <property type="match status" value="1"/>
</dbReference>
<dbReference type="SUPFAM" id="SSF50715">
    <property type="entry name" value="Ribosomal protein L25-like"/>
    <property type="match status" value="1"/>
</dbReference>
<reference key="1">
    <citation type="submission" date="2009-01" db="EMBL/GenBank/DDBJ databases">
        <title>Complete sequence of Geobacter sp. FRC-32.</title>
        <authorList>
            <consortium name="US DOE Joint Genome Institute"/>
            <person name="Lucas S."/>
            <person name="Copeland A."/>
            <person name="Lapidus A."/>
            <person name="Glavina del Rio T."/>
            <person name="Dalin E."/>
            <person name="Tice H."/>
            <person name="Bruce D."/>
            <person name="Goodwin L."/>
            <person name="Pitluck S."/>
            <person name="Saunders E."/>
            <person name="Brettin T."/>
            <person name="Detter J.C."/>
            <person name="Han C."/>
            <person name="Larimer F."/>
            <person name="Land M."/>
            <person name="Hauser L."/>
            <person name="Kyrpides N."/>
            <person name="Ovchinnikova G."/>
            <person name="Kostka J."/>
            <person name="Richardson P."/>
        </authorList>
    </citation>
    <scope>NUCLEOTIDE SEQUENCE [LARGE SCALE GENOMIC DNA]</scope>
    <source>
        <strain>DSM 22248 / JCM 15807 / FRC-32</strain>
    </source>
</reference>
<protein>
    <recommendedName>
        <fullName evidence="1">Large ribosomal subunit protein bL25</fullName>
    </recommendedName>
    <alternativeName>
        <fullName evidence="2">50S ribosomal protein L25</fullName>
    </alternativeName>
    <alternativeName>
        <fullName evidence="1">General stress protein CTC</fullName>
    </alternativeName>
</protein>
<proteinExistence type="inferred from homology"/>
<organism>
    <name type="scientific">Geotalea daltonii (strain DSM 22248 / JCM 15807 / FRC-32)</name>
    <name type="common">Geobacter daltonii</name>
    <dbReference type="NCBI Taxonomy" id="316067"/>
    <lineage>
        <taxon>Bacteria</taxon>
        <taxon>Pseudomonadati</taxon>
        <taxon>Thermodesulfobacteriota</taxon>
        <taxon>Desulfuromonadia</taxon>
        <taxon>Geobacterales</taxon>
        <taxon>Geobacteraceae</taxon>
        <taxon>Geotalea</taxon>
    </lineage>
</organism>
<gene>
    <name evidence="1" type="primary">rplY</name>
    <name evidence="1" type="synonym">ctc</name>
    <name type="ordered locus">Geob_1567</name>
</gene>
<feature type="chain" id="PRO_1000166172" description="Large ribosomal subunit protein bL25">
    <location>
        <begin position="1"/>
        <end position="196"/>
    </location>
</feature>
<accession>B9M5U4</accession>